<name>Y3081_VIBC1</name>
<proteinExistence type="inferred from homology"/>
<accession>A7MUE1</accession>
<organism>
    <name type="scientific">Vibrio campbellii (strain ATCC BAA-1116)</name>
    <dbReference type="NCBI Taxonomy" id="2902295"/>
    <lineage>
        <taxon>Bacteria</taxon>
        <taxon>Pseudomonadati</taxon>
        <taxon>Pseudomonadota</taxon>
        <taxon>Gammaproteobacteria</taxon>
        <taxon>Vibrionales</taxon>
        <taxon>Vibrionaceae</taxon>
        <taxon>Vibrio</taxon>
    </lineage>
</organism>
<gene>
    <name type="ordered locus">VIBHAR_03081</name>
</gene>
<sequence>MNQQWNQYIQIIKQVVKPALGCTEPIAAAYAAAVAKRELGCQTPDTIEVRVSDNLFKNSMGVYVPGTGKIGLKIAASVGALAGDPNAELEVLAKINQDDVTAAQQLIDEERVSVARIDTQELIFCSVTMSAGEDTVSVTISGGHTNIIQITRNGVVTFDAPQQQRVATGSVCEGVDISIKQIYDFALQAPFDDIKFILQAAELNSSLAQEGIDRGYGLEIGRTLKGNIEQGLLGNDLMSRIQMMTSAASDARMGGATLPAMSNFGSGNQGIAATMPVVIAAEAFQSSEEHLARALIMSHLGAIYIKSYYPPLSAFCGNTVTSAAASMALVYLAGGTFEQSCYAIQNVISDSSGMVCDGAKSSCAMKVCTSATTAVRSYLMAMGNHSVKNQGIIGDEVEQTIRNVGSMVRLGMPYTDKSIIDIMSA</sequence>
<evidence type="ECO:0000255" key="1">
    <source>
        <dbReference type="HAMAP-Rule" id="MF_01845"/>
    </source>
</evidence>
<protein>
    <recommendedName>
        <fullName evidence="1">UPF0597 protein VIBHAR_03081</fullName>
    </recommendedName>
</protein>
<reference key="1">
    <citation type="submission" date="2007-08" db="EMBL/GenBank/DDBJ databases">
        <authorList>
            <consortium name="The Vibrio harveyi Genome Sequencing Project"/>
            <person name="Bassler B."/>
            <person name="Clifton S.W."/>
            <person name="Fulton L."/>
            <person name="Delehaunty K."/>
            <person name="Fronick C."/>
            <person name="Harrison M."/>
            <person name="Markivic C."/>
            <person name="Fulton R."/>
            <person name="Tin-Wollam A.-M."/>
            <person name="Shah N."/>
            <person name="Pepin K."/>
            <person name="Nash W."/>
            <person name="Thiruvilangam P."/>
            <person name="Bhonagiri V."/>
            <person name="Waters C."/>
            <person name="Tu K.C."/>
            <person name="Irgon J."/>
            <person name="Wilson R.K."/>
        </authorList>
    </citation>
    <scope>NUCLEOTIDE SEQUENCE [LARGE SCALE GENOMIC DNA]</scope>
    <source>
        <strain>ATCC BAA-1116 / BB120</strain>
    </source>
</reference>
<dbReference type="EMBL" id="CP000789">
    <property type="protein sequence ID" value="ABU72031.1"/>
    <property type="molecule type" value="Genomic_DNA"/>
</dbReference>
<dbReference type="RefSeq" id="WP_012128591.1">
    <property type="nucleotide sequence ID" value="NC_009783.1"/>
</dbReference>
<dbReference type="SMR" id="A7MUE1"/>
<dbReference type="KEGG" id="vha:VIBHAR_03081"/>
<dbReference type="PATRIC" id="fig|338187.25.peg.3108"/>
<dbReference type="Proteomes" id="UP000008152">
    <property type="component" value="Chromosome I"/>
</dbReference>
<dbReference type="GO" id="GO:0080146">
    <property type="term" value="F:L-cysteine desulfhydrase activity"/>
    <property type="evidence" value="ECO:0007669"/>
    <property type="project" value="TreeGrafter"/>
</dbReference>
<dbReference type="GO" id="GO:0019450">
    <property type="term" value="P:L-cysteine catabolic process to pyruvate"/>
    <property type="evidence" value="ECO:0007669"/>
    <property type="project" value="TreeGrafter"/>
</dbReference>
<dbReference type="HAMAP" id="MF_01845">
    <property type="entry name" value="UPF0597"/>
    <property type="match status" value="1"/>
</dbReference>
<dbReference type="InterPro" id="IPR005130">
    <property type="entry name" value="Ser_deHydtase-like_asu"/>
</dbReference>
<dbReference type="InterPro" id="IPR021144">
    <property type="entry name" value="UPF0597"/>
</dbReference>
<dbReference type="PANTHER" id="PTHR30501">
    <property type="entry name" value="UPF0597 PROTEIN YHAM"/>
    <property type="match status" value="1"/>
</dbReference>
<dbReference type="PANTHER" id="PTHR30501:SF2">
    <property type="entry name" value="UPF0597 PROTEIN YHAM"/>
    <property type="match status" value="1"/>
</dbReference>
<dbReference type="Pfam" id="PF03313">
    <property type="entry name" value="SDH_alpha"/>
    <property type="match status" value="1"/>
</dbReference>
<dbReference type="PIRSF" id="PIRSF006054">
    <property type="entry name" value="UCP006054"/>
    <property type="match status" value="1"/>
</dbReference>
<feature type="chain" id="PRO_0000339866" description="UPF0597 protein VIBHAR_03081">
    <location>
        <begin position="1"/>
        <end position="425"/>
    </location>
</feature>
<comment type="similarity">
    <text evidence="1">Belongs to the UPF0597 family.</text>
</comment>